<name>DNAJ_SERP5</name>
<evidence type="ECO:0000255" key="1">
    <source>
        <dbReference type="HAMAP-Rule" id="MF_01152"/>
    </source>
</evidence>
<proteinExistence type="inferred from homology"/>
<organism>
    <name type="scientific">Serratia proteamaculans (strain 568)</name>
    <dbReference type="NCBI Taxonomy" id="399741"/>
    <lineage>
        <taxon>Bacteria</taxon>
        <taxon>Pseudomonadati</taxon>
        <taxon>Pseudomonadota</taxon>
        <taxon>Gammaproteobacteria</taxon>
        <taxon>Enterobacterales</taxon>
        <taxon>Yersiniaceae</taxon>
        <taxon>Serratia</taxon>
    </lineage>
</organism>
<sequence>MAKKDYYEILGVSKTAEEREIKKAYKRLAMKFHPDRNQEQDAEARFKEIKEAYEILTDAQKRAAYDQYGHAAFEQGGMGGGGGFGGGAEFSDIFGDVFGDIFGGGRRQRASRGSDLRYNMELSLEEAVRGVTKEIRIPTLEECGVCHGSGAKPGSSPVTCPTCHGQGQVQMRQGFFTVQQACPHCHGRGQIIKDPCNSCHGHGRVEKAKTLSVKIPAGVDTGDRIRLAGEGEAGEHGAPAGDLYVQVQVKAHPIFEREGNNLYCEVPINFAMAALGGEIEVPTLDGRVKLKVPAETQTGKLFRMRGKGVKSVRGGSQGDLLCRVVVETPVNLNDKQKQLLKELEESLGGPSGDKNSPRSKSFFDGVKKFFDDLTR</sequence>
<reference key="1">
    <citation type="submission" date="2007-09" db="EMBL/GenBank/DDBJ databases">
        <title>Complete sequence of chromosome of Serratia proteamaculans 568.</title>
        <authorList>
            <consortium name="US DOE Joint Genome Institute"/>
            <person name="Copeland A."/>
            <person name="Lucas S."/>
            <person name="Lapidus A."/>
            <person name="Barry K."/>
            <person name="Glavina del Rio T."/>
            <person name="Dalin E."/>
            <person name="Tice H."/>
            <person name="Pitluck S."/>
            <person name="Chain P."/>
            <person name="Malfatti S."/>
            <person name="Shin M."/>
            <person name="Vergez L."/>
            <person name="Schmutz J."/>
            <person name="Larimer F."/>
            <person name="Land M."/>
            <person name="Hauser L."/>
            <person name="Kyrpides N."/>
            <person name="Kim E."/>
            <person name="Taghavi S."/>
            <person name="Newman L."/>
            <person name="Vangronsveld J."/>
            <person name="van der Lelie D."/>
            <person name="Richardson P."/>
        </authorList>
    </citation>
    <scope>NUCLEOTIDE SEQUENCE [LARGE SCALE GENOMIC DNA]</scope>
    <source>
        <strain>568</strain>
    </source>
</reference>
<comment type="function">
    <text evidence="1">Participates actively in the response to hyperosmotic and heat shock by preventing the aggregation of stress-denatured proteins and by disaggregating proteins, also in an autonomous, DnaK-independent fashion. Unfolded proteins bind initially to DnaJ; upon interaction with the DnaJ-bound protein, DnaK hydrolyzes its bound ATP, resulting in the formation of a stable complex. GrpE releases ADP from DnaK; ATP binding to DnaK triggers the release of the substrate protein, thus completing the reaction cycle. Several rounds of ATP-dependent interactions between DnaJ, DnaK and GrpE are required for fully efficient folding. Also involved, together with DnaK and GrpE, in the DNA replication of plasmids through activation of initiation proteins.</text>
</comment>
<comment type="cofactor">
    <cofactor evidence="1">
        <name>Zn(2+)</name>
        <dbReference type="ChEBI" id="CHEBI:29105"/>
    </cofactor>
    <text evidence="1">Binds 2 Zn(2+) ions per monomer.</text>
</comment>
<comment type="subunit">
    <text evidence="1">Homodimer.</text>
</comment>
<comment type="subcellular location">
    <subcellularLocation>
        <location evidence="1">Cytoplasm</location>
    </subcellularLocation>
</comment>
<comment type="domain">
    <text evidence="1">The J domain is necessary and sufficient to stimulate DnaK ATPase activity. Zinc center 1 plays an important role in the autonomous, DnaK-independent chaperone activity of DnaJ. Zinc center 2 is essential for interaction with DnaK and for DnaJ activity.</text>
</comment>
<comment type="similarity">
    <text evidence="1">Belongs to the DnaJ family.</text>
</comment>
<dbReference type="EMBL" id="CP000826">
    <property type="protein sequence ID" value="ABV39799.1"/>
    <property type="molecule type" value="Genomic_DNA"/>
</dbReference>
<dbReference type="SMR" id="A8G9K9"/>
<dbReference type="STRING" id="399741.Spro_0693"/>
<dbReference type="KEGG" id="spe:Spro_0693"/>
<dbReference type="eggNOG" id="COG0484">
    <property type="taxonomic scope" value="Bacteria"/>
</dbReference>
<dbReference type="HOGENOM" id="CLU_017633_0_7_6"/>
<dbReference type="OrthoDB" id="9779889at2"/>
<dbReference type="GO" id="GO:0005737">
    <property type="term" value="C:cytoplasm"/>
    <property type="evidence" value="ECO:0007669"/>
    <property type="project" value="UniProtKB-SubCell"/>
</dbReference>
<dbReference type="GO" id="GO:0005524">
    <property type="term" value="F:ATP binding"/>
    <property type="evidence" value="ECO:0007669"/>
    <property type="project" value="InterPro"/>
</dbReference>
<dbReference type="GO" id="GO:0031072">
    <property type="term" value="F:heat shock protein binding"/>
    <property type="evidence" value="ECO:0007669"/>
    <property type="project" value="InterPro"/>
</dbReference>
<dbReference type="GO" id="GO:0051082">
    <property type="term" value="F:unfolded protein binding"/>
    <property type="evidence" value="ECO:0007669"/>
    <property type="project" value="UniProtKB-UniRule"/>
</dbReference>
<dbReference type="GO" id="GO:0008270">
    <property type="term" value="F:zinc ion binding"/>
    <property type="evidence" value="ECO:0007669"/>
    <property type="project" value="UniProtKB-UniRule"/>
</dbReference>
<dbReference type="GO" id="GO:0051085">
    <property type="term" value="P:chaperone cofactor-dependent protein refolding"/>
    <property type="evidence" value="ECO:0007669"/>
    <property type="project" value="TreeGrafter"/>
</dbReference>
<dbReference type="GO" id="GO:0006260">
    <property type="term" value="P:DNA replication"/>
    <property type="evidence" value="ECO:0007669"/>
    <property type="project" value="UniProtKB-KW"/>
</dbReference>
<dbReference type="GO" id="GO:0042026">
    <property type="term" value="P:protein refolding"/>
    <property type="evidence" value="ECO:0007669"/>
    <property type="project" value="TreeGrafter"/>
</dbReference>
<dbReference type="GO" id="GO:0009408">
    <property type="term" value="P:response to heat"/>
    <property type="evidence" value="ECO:0007669"/>
    <property type="project" value="InterPro"/>
</dbReference>
<dbReference type="CDD" id="cd06257">
    <property type="entry name" value="DnaJ"/>
    <property type="match status" value="1"/>
</dbReference>
<dbReference type="CDD" id="cd10747">
    <property type="entry name" value="DnaJ_C"/>
    <property type="match status" value="1"/>
</dbReference>
<dbReference type="CDD" id="cd10719">
    <property type="entry name" value="DnaJ_zf"/>
    <property type="match status" value="1"/>
</dbReference>
<dbReference type="FunFam" id="1.10.287.110:FF:000003">
    <property type="entry name" value="Molecular chaperone DnaJ"/>
    <property type="match status" value="1"/>
</dbReference>
<dbReference type="FunFam" id="2.10.230.10:FF:000002">
    <property type="entry name" value="Molecular chaperone DnaJ"/>
    <property type="match status" value="1"/>
</dbReference>
<dbReference type="FunFam" id="2.60.260.20:FF:000004">
    <property type="entry name" value="Molecular chaperone DnaJ"/>
    <property type="match status" value="1"/>
</dbReference>
<dbReference type="Gene3D" id="1.10.287.110">
    <property type="entry name" value="DnaJ domain"/>
    <property type="match status" value="1"/>
</dbReference>
<dbReference type="Gene3D" id="2.10.230.10">
    <property type="entry name" value="Heat shock protein DnaJ, cysteine-rich domain"/>
    <property type="match status" value="1"/>
</dbReference>
<dbReference type="Gene3D" id="2.60.260.20">
    <property type="entry name" value="Urease metallochaperone UreE, N-terminal domain"/>
    <property type="match status" value="2"/>
</dbReference>
<dbReference type="HAMAP" id="MF_01152">
    <property type="entry name" value="DnaJ"/>
    <property type="match status" value="1"/>
</dbReference>
<dbReference type="InterPro" id="IPR012724">
    <property type="entry name" value="DnaJ"/>
</dbReference>
<dbReference type="InterPro" id="IPR002939">
    <property type="entry name" value="DnaJ_C"/>
</dbReference>
<dbReference type="InterPro" id="IPR001623">
    <property type="entry name" value="DnaJ_domain"/>
</dbReference>
<dbReference type="InterPro" id="IPR018253">
    <property type="entry name" value="DnaJ_domain_CS"/>
</dbReference>
<dbReference type="InterPro" id="IPR008971">
    <property type="entry name" value="HSP40/DnaJ_pept-bd"/>
</dbReference>
<dbReference type="InterPro" id="IPR001305">
    <property type="entry name" value="HSP_DnaJ_Cys-rich_dom"/>
</dbReference>
<dbReference type="InterPro" id="IPR036410">
    <property type="entry name" value="HSP_DnaJ_Cys-rich_dom_sf"/>
</dbReference>
<dbReference type="InterPro" id="IPR036869">
    <property type="entry name" value="J_dom_sf"/>
</dbReference>
<dbReference type="NCBIfam" id="TIGR02349">
    <property type="entry name" value="DnaJ_bact"/>
    <property type="match status" value="1"/>
</dbReference>
<dbReference type="NCBIfam" id="NF008035">
    <property type="entry name" value="PRK10767.1"/>
    <property type="match status" value="1"/>
</dbReference>
<dbReference type="PANTHER" id="PTHR43096:SF48">
    <property type="entry name" value="CHAPERONE PROTEIN DNAJ"/>
    <property type="match status" value="1"/>
</dbReference>
<dbReference type="PANTHER" id="PTHR43096">
    <property type="entry name" value="DNAJ HOMOLOG 1, MITOCHONDRIAL-RELATED"/>
    <property type="match status" value="1"/>
</dbReference>
<dbReference type="Pfam" id="PF00226">
    <property type="entry name" value="DnaJ"/>
    <property type="match status" value="1"/>
</dbReference>
<dbReference type="Pfam" id="PF01556">
    <property type="entry name" value="DnaJ_C"/>
    <property type="match status" value="1"/>
</dbReference>
<dbReference type="Pfam" id="PF00684">
    <property type="entry name" value="DnaJ_CXXCXGXG"/>
    <property type="match status" value="1"/>
</dbReference>
<dbReference type="PRINTS" id="PR00625">
    <property type="entry name" value="JDOMAIN"/>
</dbReference>
<dbReference type="SMART" id="SM00271">
    <property type="entry name" value="DnaJ"/>
    <property type="match status" value="1"/>
</dbReference>
<dbReference type="SUPFAM" id="SSF46565">
    <property type="entry name" value="Chaperone J-domain"/>
    <property type="match status" value="1"/>
</dbReference>
<dbReference type="SUPFAM" id="SSF57938">
    <property type="entry name" value="DnaJ/Hsp40 cysteine-rich domain"/>
    <property type="match status" value="1"/>
</dbReference>
<dbReference type="SUPFAM" id="SSF49493">
    <property type="entry name" value="HSP40/DnaJ peptide-binding domain"/>
    <property type="match status" value="2"/>
</dbReference>
<dbReference type="PROSITE" id="PS00636">
    <property type="entry name" value="DNAJ_1"/>
    <property type="match status" value="1"/>
</dbReference>
<dbReference type="PROSITE" id="PS50076">
    <property type="entry name" value="DNAJ_2"/>
    <property type="match status" value="1"/>
</dbReference>
<dbReference type="PROSITE" id="PS51188">
    <property type="entry name" value="ZF_CR"/>
    <property type="match status" value="1"/>
</dbReference>
<gene>
    <name evidence="1" type="primary">dnaJ</name>
    <name type="ordered locus">Spro_0693</name>
</gene>
<keyword id="KW-0143">Chaperone</keyword>
<keyword id="KW-0963">Cytoplasm</keyword>
<keyword id="KW-0235">DNA replication</keyword>
<keyword id="KW-0479">Metal-binding</keyword>
<keyword id="KW-0677">Repeat</keyword>
<keyword id="KW-0346">Stress response</keyword>
<keyword id="KW-0862">Zinc</keyword>
<keyword id="KW-0863">Zinc-finger</keyword>
<feature type="chain" id="PRO_1000085285" description="Chaperone protein DnaJ">
    <location>
        <begin position="1"/>
        <end position="375"/>
    </location>
</feature>
<feature type="domain" description="J" evidence="1">
    <location>
        <begin position="5"/>
        <end position="69"/>
    </location>
</feature>
<feature type="repeat" description="CXXCXGXG motif">
    <location>
        <begin position="143"/>
        <end position="150"/>
    </location>
</feature>
<feature type="repeat" description="CXXCXGXG motif">
    <location>
        <begin position="160"/>
        <end position="167"/>
    </location>
</feature>
<feature type="repeat" description="CXXCXGXG motif">
    <location>
        <begin position="182"/>
        <end position="189"/>
    </location>
</feature>
<feature type="repeat" description="CXXCXGXG motif">
    <location>
        <begin position="196"/>
        <end position="203"/>
    </location>
</feature>
<feature type="zinc finger region" description="CR-type" evidence="1">
    <location>
        <begin position="130"/>
        <end position="208"/>
    </location>
</feature>
<feature type="binding site" evidence="1">
    <location>
        <position position="143"/>
    </location>
    <ligand>
        <name>Zn(2+)</name>
        <dbReference type="ChEBI" id="CHEBI:29105"/>
        <label>1</label>
    </ligand>
</feature>
<feature type="binding site" evidence="1">
    <location>
        <position position="146"/>
    </location>
    <ligand>
        <name>Zn(2+)</name>
        <dbReference type="ChEBI" id="CHEBI:29105"/>
        <label>1</label>
    </ligand>
</feature>
<feature type="binding site" evidence="1">
    <location>
        <position position="160"/>
    </location>
    <ligand>
        <name>Zn(2+)</name>
        <dbReference type="ChEBI" id="CHEBI:29105"/>
        <label>2</label>
    </ligand>
</feature>
<feature type="binding site" evidence="1">
    <location>
        <position position="163"/>
    </location>
    <ligand>
        <name>Zn(2+)</name>
        <dbReference type="ChEBI" id="CHEBI:29105"/>
        <label>2</label>
    </ligand>
</feature>
<feature type="binding site" evidence="1">
    <location>
        <position position="182"/>
    </location>
    <ligand>
        <name>Zn(2+)</name>
        <dbReference type="ChEBI" id="CHEBI:29105"/>
        <label>2</label>
    </ligand>
</feature>
<feature type="binding site" evidence="1">
    <location>
        <position position="185"/>
    </location>
    <ligand>
        <name>Zn(2+)</name>
        <dbReference type="ChEBI" id="CHEBI:29105"/>
        <label>2</label>
    </ligand>
</feature>
<feature type="binding site" evidence="1">
    <location>
        <position position="196"/>
    </location>
    <ligand>
        <name>Zn(2+)</name>
        <dbReference type="ChEBI" id="CHEBI:29105"/>
        <label>1</label>
    </ligand>
</feature>
<feature type="binding site" evidence="1">
    <location>
        <position position="199"/>
    </location>
    <ligand>
        <name>Zn(2+)</name>
        <dbReference type="ChEBI" id="CHEBI:29105"/>
        <label>1</label>
    </ligand>
</feature>
<accession>A8G9K9</accession>
<protein>
    <recommendedName>
        <fullName evidence="1">Chaperone protein DnaJ</fullName>
    </recommendedName>
</protein>